<sequence length="476" mass="53657">MDFEAVIGLEVHAELSTNTKIYCGCTTEFGGQPNTHVCPICLGLPGSLPQLNKRVVEYGIKAGLALNCSINKVCRMDRKNYFYPDCPKNYQITQDEVPICRDGYIEIELENGEKKKIGIERIHMEEDAGKLLHTNAGTLVDYNRAGVPLIEIVSRPDIRTPEEATKYLEKLKSILSSIEVSDCKMEQGSLRCDGNISVMPKGSEKFGVRSEIKNMNSFKALEKALSYEYDRHVEAVTKGEILEQETRRWDEANSVTVLMRSKEKANDYRYFPEGDLVTLNISDEWIEEVRKTIPELPHEKAERFVNEFGIPKYDAMVLTLTMDMAKFFEETALKSEDAKAASNWLMGDISRLMNEKAIEVKDLKFNPEQLAQLIKLINAGTISNNIGKKVLDDMFKSGKNPKDIVEEKGLVQNNDEGAILEVVKNIIENNPQSIEDFKNGKKRALGFLVGLVMKETKGKANPQIVNKLVSEEANKM</sequence>
<organism>
    <name type="scientific">Clostridium botulinum (strain Hall / ATCC 3502 / NCTC 13319 / Type A)</name>
    <dbReference type="NCBI Taxonomy" id="441771"/>
    <lineage>
        <taxon>Bacteria</taxon>
        <taxon>Bacillati</taxon>
        <taxon>Bacillota</taxon>
        <taxon>Clostridia</taxon>
        <taxon>Eubacteriales</taxon>
        <taxon>Clostridiaceae</taxon>
        <taxon>Clostridium</taxon>
    </lineage>
</organism>
<keyword id="KW-0067">ATP-binding</keyword>
<keyword id="KW-0436">Ligase</keyword>
<keyword id="KW-0547">Nucleotide-binding</keyword>
<keyword id="KW-0648">Protein biosynthesis</keyword>
<keyword id="KW-1185">Reference proteome</keyword>
<protein>
    <recommendedName>
        <fullName evidence="1">Aspartyl/glutamyl-tRNA(Asn/Gln) amidotransferase subunit B</fullName>
        <shortName evidence="1">Asp/Glu-ADT subunit B</shortName>
        <ecNumber evidence="1">6.3.5.-</ecNumber>
    </recommendedName>
</protein>
<name>GATB_CLOBH</name>
<gene>
    <name evidence="1" type="primary">gatB</name>
    <name type="ordered locus">CBO3265</name>
    <name type="ordered locus">CLC_3208</name>
</gene>
<dbReference type="EC" id="6.3.5.-" evidence="1"/>
<dbReference type="EMBL" id="CP000727">
    <property type="protein sequence ID" value="ABS36710.1"/>
    <property type="molecule type" value="Genomic_DNA"/>
</dbReference>
<dbReference type="EMBL" id="AM412317">
    <property type="protein sequence ID" value="CAL84824.1"/>
    <property type="molecule type" value="Genomic_DNA"/>
</dbReference>
<dbReference type="RefSeq" id="WP_012048223.1">
    <property type="nucleotide sequence ID" value="NC_009698.1"/>
</dbReference>
<dbReference type="RefSeq" id="YP_001255751.1">
    <property type="nucleotide sequence ID" value="NC_009495.1"/>
</dbReference>
<dbReference type="RefSeq" id="YP_001388991.1">
    <property type="nucleotide sequence ID" value="NC_009698.1"/>
</dbReference>
<dbReference type="SMR" id="A5I6Z2"/>
<dbReference type="GeneID" id="5187519"/>
<dbReference type="KEGG" id="cbh:CLC_3208"/>
<dbReference type="KEGG" id="cbo:CBO3265"/>
<dbReference type="PATRIC" id="fig|413999.7.peg.3241"/>
<dbReference type="HOGENOM" id="CLU_019240_0_0_9"/>
<dbReference type="PRO" id="PR:A5I6Z2"/>
<dbReference type="Proteomes" id="UP000001986">
    <property type="component" value="Chromosome"/>
</dbReference>
<dbReference type="GO" id="GO:0050566">
    <property type="term" value="F:asparaginyl-tRNA synthase (glutamine-hydrolyzing) activity"/>
    <property type="evidence" value="ECO:0007669"/>
    <property type="project" value="RHEA"/>
</dbReference>
<dbReference type="GO" id="GO:0005524">
    <property type="term" value="F:ATP binding"/>
    <property type="evidence" value="ECO:0007669"/>
    <property type="project" value="UniProtKB-KW"/>
</dbReference>
<dbReference type="GO" id="GO:0050567">
    <property type="term" value="F:glutaminyl-tRNA synthase (glutamine-hydrolyzing) activity"/>
    <property type="evidence" value="ECO:0000318"/>
    <property type="project" value="GO_Central"/>
</dbReference>
<dbReference type="GO" id="GO:0070681">
    <property type="term" value="P:glutaminyl-tRNAGln biosynthesis via transamidation"/>
    <property type="evidence" value="ECO:0000318"/>
    <property type="project" value="GO_Central"/>
</dbReference>
<dbReference type="GO" id="GO:0006412">
    <property type="term" value="P:translation"/>
    <property type="evidence" value="ECO:0007669"/>
    <property type="project" value="UniProtKB-UniRule"/>
</dbReference>
<dbReference type="FunFam" id="1.10.10.410:FF:000001">
    <property type="entry name" value="Aspartyl/glutamyl-tRNA(Asn/Gln) amidotransferase subunit B"/>
    <property type="match status" value="1"/>
</dbReference>
<dbReference type="FunFam" id="1.10.150.380:FF:000001">
    <property type="entry name" value="Aspartyl/glutamyl-tRNA(Asn/Gln) amidotransferase subunit B"/>
    <property type="match status" value="1"/>
</dbReference>
<dbReference type="Gene3D" id="1.10.10.410">
    <property type="match status" value="1"/>
</dbReference>
<dbReference type="Gene3D" id="1.10.150.380">
    <property type="entry name" value="GatB domain, N-terminal subdomain"/>
    <property type="match status" value="1"/>
</dbReference>
<dbReference type="HAMAP" id="MF_00121">
    <property type="entry name" value="GatB"/>
    <property type="match status" value="1"/>
</dbReference>
<dbReference type="InterPro" id="IPR017959">
    <property type="entry name" value="Asn/Gln-tRNA_amidoTrfase_suB/E"/>
</dbReference>
<dbReference type="InterPro" id="IPR006075">
    <property type="entry name" value="Asn/Gln-tRNA_Trfase_suB/E_cat"/>
</dbReference>
<dbReference type="InterPro" id="IPR018027">
    <property type="entry name" value="Asn/Gln_amidotransferase"/>
</dbReference>
<dbReference type="InterPro" id="IPR003789">
    <property type="entry name" value="Asn/Gln_tRNA_amidoTrase-B-like"/>
</dbReference>
<dbReference type="InterPro" id="IPR004413">
    <property type="entry name" value="GatB"/>
</dbReference>
<dbReference type="InterPro" id="IPR042114">
    <property type="entry name" value="GatB_C_1"/>
</dbReference>
<dbReference type="InterPro" id="IPR023168">
    <property type="entry name" value="GatB_Yqey_C_2"/>
</dbReference>
<dbReference type="InterPro" id="IPR017958">
    <property type="entry name" value="Gln-tRNA_amidoTrfase_suB_CS"/>
</dbReference>
<dbReference type="InterPro" id="IPR014746">
    <property type="entry name" value="Gln_synth/guanido_kin_cat_dom"/>
</dbReference>
<dbReference type="NCBIfam" id="TIGR00133">
    <property type="entry name" value="gatB"/>
    <property type="match status" value="1"/>
</dbReference>
<dbReference type="NCBIfam" id="NF004012">
    <property type="entry name" value="PRK05477.1-2"/>
    <property type="match status" value="1"/>
</dbReference>
<dbReference type="NCBIfam" id="NF004014">
    <property type="entry name" value="PRK05477.1-4"/>
    <property type="match status" value="1"/>
</dbReference>
<dbReference type="PANTHER" id="PTHR11659">
    <property type="entry name" value="GLUTAMYL-TRNA GLN AMIDOTRANSFERASE SUBUNIT B MITOCHONDRIAL AND PROKARYOTIC PET112-RELATED"/>
    <property type="match status" value="1"/>
</dbReference>
<dbReference type="PANTHER" id="PTHR11659:SF0">
    <property type="entry name" value="GLUTAMYL-TRNA(GLN) AMIDOTRANSFERASE SUBUNIT B, MITOCHONDRIAL"/>
    <property type="match status" value="1"/>
</dbReference>
<dbReference type="Pfam" id="PF02934">
    <property type="entry name" value="GatB_N"/>
    <property type="match status" value="1"/>
</dbReference>
<dbReference type="Pfam" id="PF02637">
    <property type="entry name" value="GatB_Yqey"/>
    <property type="match status" value="1"/>
</dbReference>
<dbReference type="SMART" id="SM00845">
    <property type="entry name" value="GatB_Yqey"/>
    <property type="match status" value="1"/>
</dbReference>
<dbReference type="SUPFAM" id="SSF89095">
    <property type="entry name" value="GatB/YqeY motif"/>
    <property type="match status" value="1"/>
</dbReference>
<dbReference type="SUPFAM" id="SSF55931">
    <property type="entry name" value="Glutamine synthetase/guanido kinase"/>
    <property type="match status" value="1"/>
</dbReference>
<dbReference type="PROSITE" id="PS01234">
    <property type="entry name" value="GATB"/>
    <property type="match status" value="1"/>
</dbReference>
<proteinExistence type="inferred from homology"/>
<feature type="chain" id="PRO_1000015959" description="Aspartyl/glutamyl-tRNA(Asn/Gln) amidotransferase subunit B">
    <location>
        <begin position="1"/>
        <end position="476"/>
    </location>
</feature>
<evidence type="ECO:0000255" key="1">
    <source>
        <dbReference type="HAMAP-Rule" id="MF_00121"/>
    </source>
</evidence>
<reference key="1">
    <citation type="journal article" date="2007" name="Genome Res.">
        <title>Genome sequence of a proteolytic (Group I) Clostridium botulinum strain Hall A and comparative analysis of the clostridial genomes.</title>
        <authorList>
            <person name="Sebaihia M."/>
            <person name="Peck M.W."/>
            <person name="Minton N.P."/>
            <person name="Thomson N.R."/>
            <person name="Holden M.T.G."/>
            <person name="Mitchell W.J."/>
            <person name="Carter A.T."/>
            <person name="Bentley S.D."/>
            <person name="Mason D.R."/>
            <person name="Crossman L."/>
            <person name="Paul C.J."/>
            <person name="Ivens A."/>
            <person name="Wells-Bennik M.H.J."/>
            <person name="Davis I.J."/>
            <person name="Cerdeno-Tarraga A.M."/>
            <person name="Churcher C."/>
            <person name="Quail M.A."/>
            <person name="Chillingworth T."/>
            <person name="Feltwell T."/>
            <person name="Fraser A."/>
            <person name="Goodhead I."/>
            <person name="Hance Z."/>
            <person name="Jagels K."/>
            <person name="Larke N."/>
            <person name="Maddison M."/>
            <person name="Moule S."/>
            <person name="Mungall K."/>
            <person name="Norbertczak H."/>
            <person name="Rabbinowitsch E."/>
            <person name="Sanders M."/>
            <person name="Simmonds M."/>
            <person name="White B."/>
            <person name="Whithead S."/>
            <person name="Parkhill J."/>
        </authorList>
    </citation>
    <scope>NUCLEOTIDE SEQUENCE [LARGE SCALE GENOMIC DNA]</scope>
    <source>
        <strain>Hall / ATCC 3502 / NCTC 13319 / Type A</strain>
    </source>
</reference>
<reference key="2">
    <citation type="journal article" date="2007" name="PLoS ONE">
        <title>Analysis of the neurotoxin complex genes in Clostridium botulinum A1-A4 and B1 strains: BoNT/A3, /Ba4 and /B1 clusters are located within plasmids.</title>
        <authorList>
            <person name="Smith T.J."/>
            <person name="Hill K.K."/>
            <person name="Foley B.T."/>
            <person name="Detter J.C."/>
            <person name="Munk A.C."/>
            <person name="Bruce D.C."/>
            <person name="Doggett N.A."/>
            <person name="Smith L.A."/>
            <person name="Marks J.D."/>
            <person name="Xie G."/>
            <person name="Brettin T.S."/>
        </authorList>
    </citation>
    <scope>NUCLEOTIDE SEQUENCE [LARGE SCALE GENOMIC DNA]</scope>
    <source>
        <strain>Hall / ATCC 3502 / NCTC 13319 / Type A</strain>
    </source>
</reference>
<comment type="function">
    <text evidence="1">Allows the formation of correctly charged Asn-tRNA(Asn) or Gln-tRNA(Gln) through the transamidation of misacylated Asp-tRNA(Asn) or Glu-tRNA(Gln) in organisms which lack either or both of asparaginyl-tRNA or glutaminyl-tRNA synthetases. The reaction takes place in the presence of glutamine and ATP through an activated phospho-Asp-tRNA(Asn) or phospho-Glu-tRNA(Gln).</text>
</comment>
<comment type="catalytic activity">
    <reaction evidence="1">
        <text>L-glutamyl-tRNA(Gln) + L-glutamine + ATP + H2O = L-glutaminyl-tRNA(Gln) + L-glutamate + ADP + phosphate + H(+)</text>
        <dbReference type="Rhea" id="RHEA:17521"/>
        <dbReference type="Rhea" id="RHEA-COMP:9681"/>
        <dbReference type="Rhea" id="RHEA-COMP:9684"/>
        <dbReference type="ChEBI" id="CHEBI:15377"/>
        <dbReference type="ChEBI" id="CHEBI:15378"/>
        <dbReference type="ChEBI" id="CHEBI:29985"/>
        <dbReference type="ChEBI" id="CHEBI:30616"/>
        <dbReference type="ChEBI" id="CHEBI:43474"/>
        <dbReference type="ChEBI" id="CHEBI:58359"/>
        <dbReference type="ChEBI" id="CHEBI:78520"/>
        <dbReference type="ChEBI" id="CHEBI:78521"/>
        <dbReference type="ChEBI" id="CHEBI:456216"/>
    </reaction>
</comment>
<comment type="catalytic activity">
    <reaction evidence="1">
        <text>L-aspartyl-tRNA(Asn) + L-glutamine + ATP + H2O = L-asparaginyl-tRNA(Asn) + L-glutamate + ADP + phosphate + 2 H(+)</text>
        <dbReference type="Rhea" id="RHEA:14513"/>
        <dbReference type="Rhea" id="RHEA-COMP:9674"/>
        <dbReference type="Rhea" id="RHEA-COMP:9677"/>
        <dbReference type="ChEBI" id="CHEBI:15377"/>
        <dbReference type="ChEBI" id="CHEBI:15378"/>
        <dbReference type="ChEBI" id="CHEBI:29985"/>
        <dbReference type="ChEBI" id="CHEBI:30616"/>
        <dbReference type="ChEBI" id="CHEBI:43474"/>
        <dbReference type="ChEBI" id="CHEBI:58359"/>
        <dbReference type="ChEBI" id="CHEBI:78515"/>
        <dbReference type="ChEBI" id="CHEBI:78516"/>
        <dbReference type="ChEBI" id="CHEBI:456216"/>
    </reaction>
</comment>
<comment type="subunit">
    <text evidence="1">Heterotrimer of A, B and C subunits.</text>
</comment>
<comment type="similarity">
    <text evidence="1">Belongs to the GatB/GatE family. GatB subfamily.</text>
</comment>
<accession>A5I6Z2</accession>
<accession>A7G876</accession>